<dbReference type="EC" id="4.1.1.23" evidence="1"/>
<dbReference type="EMBL" id="CP000544">
    <property type="protein sequence ID" value="ABM61345.1"/>
    <property type="molecule type" value="Genomic_DNA"/>
</dbReference>
<dbReference type="RefSeq" id="WP_011813368.1">
    <property type="nucleotide sequence ID" value="NC_008789.1"/>
</dbReference>
<dbReference type="SMR" id="A1WUI3"/>
<dbReference type="STRING" id="349124.Hhal_0559"/>
<dbReference type="KEGG" id="hha:Hhal_0559"/>
<dbReference type="eggNOG" id="COG0284">
    <property type="taxonomic scope" value="Bacteria"/>
</dbReference>
<dbReference type="HOGENOM" id="CLU_067069_0_0_6"/>
<dbReference type="OrthoDB" id="9806203at2"/>
<dbReference type="UniPathway" id="UPA00070">
    <property type="reaction ID" value="UER00120"/>
</dbReference>
<dbReference type="Proteomes" id="UP000000647">
    <property type="component" value="Chromosome"/>
</dbReference>
<dbReference type="GO" id="GO:0005829">
    <property type="term" value="C:cytosol"/>
    <property type="evidence" value="ECO:0007669"/>
    <property type="project" value="TreeGrafter"/>
</dbReference>
<dbReference type="GO" id="GO:0004590">
    <property type="term" value="F:orotidine-5'-phosphate decarboxylase activity"/>
    <property type="evidence" value="ECO:0007669"/>
    <property type="project" value="UniProtKB-UniRule"/>
</dbReference>
<dbReference type="GO" id="GO:0006207">
    <property type="term" value="P:'de novo' pyrimidine nucleobase biosynthetic process"/>
    <property type="evidence" value="ECO:0007669"/>
    <property type="project" value="InterPro"/>
</dbReference>
<dbReference type="GO" id="GO:0044205">
    <property type="term" value="P:'de novo' UMP biosynthetic process"/>
    <property type="evidence" value="ECO:0007669"/>
    <property type="project" value="UniProtKB-UniRule"/>
</dbReference>
<dbReference type="CDD" id="cd04725">
    <property type="entry name" value="OMP_decarboxylase_like"/>
    <property type="match status" value="1"/>
</dbReference>
<dbReference type="FunFam" id="3.20.20.70:FF:000015">
    <property type="entry name" value="Orotidine 5'-phosphate decarboxylase"/>
    <property type="match status" value="1"/>
</dbReference>
<dbReference type="Gene3D" id="3.20.20.70">
    <property type="entry name" value="Aldolase class I"/>
    <property type="match status" value="1"/>
</dbReference>
<dbReference type="HAMAP" id="MF_01200_B">
    <property type="entry name" value="OMPdecase_type1_B"/>
    <property type="match status" value="1"/>
</dbReference>
<dbReference type="InterPro" id="IPR013785">
    <property type="entry name" value="Aldolase_TIM"/>
</dbReference>
<dbReference type="InterPro" id="IPR014732">
    <property type="entry name" value="OMPdecase"/>
</dbReference>
<dbReference type="InterPro" id="IPR018089">
    <property type="entry name" value="OMPdecase_AS"/>
</dbReference>
<dbReference type="InterPro" id="IPR047596">
    <property type="entry name" value="OMPdecase_bac"/>
</dbReference>
<dbReference type="InterPro" id="IPR001754">
    <property type="entry name" value="OMPdeCOase_dom"/>
</dbReference>
<dbReference type="InterPro" id="IPR011060">
    <property type="entry name" value="RibuloseP-bd_barrel"/>
</dbReference>
<dbReference type="NCBIfam" id="NF001273">
    <property type="entry name" value="PRK00230.1"/>
    <property type="match status" value="1"/>
</dbReference>
<dbReference type="NCBIfam" id="TIGR01740">
    <property type="entry name" value="pyrF"/>
    <property type="match status" value="1"/>
</dbReference>
<dbReference type="PANTHER" id="PTHR32119">
    <property type="entry name" value="OROTIDINE 5'-PHOSPHATE DECARBOXYLASE"/>
    <property type="match status" value="1"/>
</dbReference>
<dbReference type="PANTHER" id="PTHR32119:SF2">
    <property type="entry name" value="OROTIDINE 5'-PHOSPHATE DECARBOXYLASE"/>
    <property type="match status" value="1"/>
</dbReference>
<dbReference type="Pfam" id="PF00215">
    <property type="entry name" value="OMPdecase"/>
    <property type="match status" value="1"/>
</dbReference>
<dbReference type="SMART" id="SM00934">
    <property type="entry name" value="OMPdecase"/>
    <property type="match status" value="1"/>
</dbReference>
<dbReference type="SUPFAM" id="SSF51366">
    <property type="entry name" value="Ribulose-phoshate binding barrel"/>
    <property type="match status" value="1"/>
</dbReference>
<dbReference type="PROSITE" id="PS00156">
    <property type="entry name" value="OMPDECASE"/>
    <property type="match status" value="1"/>
</dbReference>
<sequence>MSVPGPPRLVVALDFPAAAPAEALAAQLDPRLCRLKVGKELFTRAGPQLVERLHARGFEVFLDLKYHDIPNTVAGACRAAADLGVWMVNVHALGGRRMLEAAAEAVAAAEGRTLITAVTVLTSHDAATLEEIGLAGPPREAVLRLAGLAQASGLDGVVCSPEEAAAIGERFGAGLLRVTPGVRPAGAALGDQQRIATPAAAVAAGCDHLVVGRPITAAEDPAAAAAAIAAEIAAAG</sequence>
<protein>
    <recommendedName>
        <fullName evidence="1">Orotidine 5'-phosphate decarboxylase</fullName>
        <ecNumber evidence="1">4.1.1.23</ecNumber>
    </recommendedName>
    <alternativeName>
        <fullName evidence="1">OMP decarboxylase</fullName>
        <shortName evidence="1">OMPDCase</shortName>
        <shortName evidence="1">OMPdecase</shortName>
    </alternativeName>
</protein>
<gene>
    <name evidence="1" type="primary">pyrF</name>
    <name type="ordered locus">Hhal_0559</name>
</gene>
<reference key="1">
    <citation type="submission" date="2006-12" db="EMBL/GenBank/DDBJ databases">
        <title>Complete sequence of Halorhodospira halophila SL1.</title>
        <authorList>
            <consortium name="US DOE Joint Genome Institute"/>
            <person name="Copeland A."/>
            <person name="Lucas S."/>
            <person name="Lapidus A."/>
            <person name="Barry K."/>
            <person name="Detter J.C."/>
            <person name="Glavina del Rio T."/>
            <person name="Hammon N."/>
            <person name="Israni S."/>
            <person name="Dalin E."/>
            <person name="Tice H."/>
            <person name="Pitluck S."/>
            <person name="Saunders E."/>
            <person name="Brettin T."/>
            <person name="Bruce D."/>
            <person name="Han C."/>
            <person name="Tapia R."/>
            <person name="Schmutz J."/>
            <person name="Larimer F."/>
            <person name="Land M."/>
            <person name="Hauser L."/>
            <person name="Kyrpides N."/>
            <person name="Mikhailova N."/>
            <person name="Hoff W."/>
            <person name="Richardson P."/>
        </authorList>
    </citation>
    <scope>NUCLEOTIDE SEQUENCE [LARGE SCALE GENOMIC DNA]</scope>
    <source>
        <strain>DSM 244 / SL1</strain>
    </source>
</reference>
<organism>
    <name type="scientific">Halorhodospira halophila (strain DSM 244 / SL1)</name>
    <name type="common">Ectothiorhodospira halophila (strain DSM 244 / SL1)</name>
    <dbReference type="NCBI Taxonomy" id="349124"/>
    <lineage>
        <taxon>Bacteria</taxon>
        <taxon>Pseudomonadati</taxon>
        <taxon>Pseudomonadota</taxon>
        <taxon>Gammaproteobacteria</taxon>
        <taxon>Chromatiales</taxon>
        <taxon>Ectothiorhodospiraceae</taxon>
        <taxon>Halorhodospira</taxon>
    </lineage>
</organism>
<keyword id="KW-0210">Decarboxylase</keyword>
<keyword id="KW-0456">Lyase</keyword>
<keyword id="KW-0665">Pyrimidine biosynthesis</keyword>
<keyword id="KW-1185">Reference proteome</keyword>
<feature type="chain" id="PRO_1000073089" description="Orotidine 5'-phosphate decarboxylase">
    <location>
        <begin position="1"/>
        <end position="236"/>
    </location>
</feature>
<feature type="active site" description="Proton donor" evidence="1">
    <location>
        <position position="65"/>
    </location>
</feature>
<feature type="binding site" evidence="1">
    <location>
        <position position="14"/>
    </location>
    <ligand>
        <name>substrate</name>
    </ligand>
</feature>
<feature type="binding site" evidence="1">
    <location>
        <position position="36"/>
    </location>
    <ligand>
        <name>substrate</name>
    </ligand>
</feature>
<feature type="binding site" evidence="1">
    <location>
        <begin position="63"/>
        <end position="72"/>
    </location>
    <ligand>
        <name>substrate</name>
    </ligand>
</feature>
<feature type="binding site" evidence="1">
    <location>
        <position position="122"/>
    </location>
    <ligand>
        <name>substrate</name>
    </ligand>
</feature>
<feature type="binding site" evidence="1">
    <location>
        <position position="183"/>
    </location>
    <ligand>
        <name>substrate</name>
    </ligand>
</feature>
<feature type="binding site" evidence="1">
    <location>
        <position position="192"/>
    </location>
    <ligand>
        <name>substrate</name>
    </ligand>
</feature>
<feature type="binding site" evidence="1">
    <location>
        <position position="212"/>
    </location>
    <ligand>
        <name>substrate</name>
    </ligand>
</feature>
<feature type="binding site" evidence="1">
    <location>
        <position position="213"/>
    </location>
    <ligand>
        <name>substrate</name>
    </ligand>
</feature>
<name>PYRF_HALHL</name>
<proteinExistence type="inferred from homology"/>
<evidence type="ECO:0000255" key="1">
    <source>
        <dbReference type="HAMAP-Rule" id="MF_01200"/>
    </source>
</evidence>
<comment type="function">
    <text evidence="1">Catalyzes the decarboxylation of orotidine 5'-monophosphate (OMP) to uridine 5'-monophosphate (UMP).</text>
</comment>
<comment type="catalytic activity">
    <reaction evidence="1">
        <text>orotidine 5'-phosphate + H(+) = UMP + CO2</text>
        <dbReference type="Rhea" id="RHEA:11596"/>
        <dbReference type="ChEBI" id="CHEBI:15378"/>
        <dbReference type="ChEBI" id="CHEBI:16526"/>
        <dbReference type="ChEBI" id="CHEBI:57538"/>
        <dbReference type="ChEBI" id="CHEBI:57865"/>
        <dbReference type="EC" id="4.1.1.23"/>
    </reaction>
</comment>
<comment type="pathway">
    <text evidence="1">Pyrimidine metabolism; UMP biosynthesis via de novo pathway; UMP from orotate: step 2/2.</text>
</comment>
<comment type="subunit">
    <text evidence="1">Homodimer.</text>
</comment>
<comment type="similarity">
    <text evidence="1">Belongs to the OMP decarboxylase family. Type 1 subfamily.</text>
</comment>
<accession>A1WUI3</accession>